<proteinExistence type="inferred from homology"/>
<sequence>MRTFAIFLLIALGWLQYTLWFGKNGMSDYAQVSNDVALQEEVNQGLRNRNEQMFAEIDDLKKGSEAIEERARHELGMIKKGETFYRIIDENSEG</sequence>
<evidence type="ECO:0000255" key="1">
    <source>
        <dbReference type="HAMAP-Rule" id="MF_00599"/>
    </source>
</evidence>
<protein>
    <recommendedName>
        <fullName evidence="1">Cell division protein FtsB</fullName>
    </recommendedName>
</protein>
<reference key="1">
    <citation type="submission" date="2008-08" db="EMBL/GenBank/DDBJ databases">
        <title>Complete sequence of Vibrio fischeri strain MJ11.</title>
        <authorList>
            <person name="Mandel M.J."/>
            <person name="Stabb E.V."/>
            <person name="Ruby E.G."/>
            <person name="Ferriera S."/>
            <person name="Johnson J."/>
            <person name="Kravitz S."/>
            <person name="Beeson K."/>
            <person name="Sutton G."/>
            <person name="Rogers Y.-H."/>
            <person name="Friedman R."/>
            <person name="Frazier M."/>
            <person name="Venter J.C."/>
        </authorList>
    </citation>
    <scope>NUCLEOTIDE SEQUENCE [LARGE SCALE GENOMIC DNA]</scope>
    <source>
        <strain>MJ11</strain>
    </source>
</reference>
<accession>B5FAF8</accession>
<dbReference type="EMBL" id="CP001139">
    <property type="protein sequence ID" value="ACH66174.1"/>
    <property type="molecule type" value="Genomic_DNA"/>
</dbReference>
<dbReference type="RefSeq" id="WP_005420699.1">
    <property type="nucleotide sequence ID" value="NC_011184.1"/>
</dbReference>
<dbReference type="SMR" id="B5FAF8"/>
<dbReference type="GeneID" id="54164780"/>
<dbReference type="KEGG" id="vfm:VFMJ11_2180"/>
<dbReference type="HOGENOM" id="CLU_134863_5_2_6"/>
<dbReference type="Proteomes" id="UP000001857">
    <property type="component" value="Chromosome I"/>
</dbReference>
<dbReference type="GO" id="GO:0032153">
    <property type="term" value="C:cell division site"/>
    <property type="evidence" value="ECO:0007669"/>
    <property type="project" value="UniProtKB-UniRule"/>
</dbReference>
<dbReference type="GO" id="GO:0030428">
    <property type="term" value="C:cell septum"/>
    <property type="evidence" value="ECO:0007669"/>
    <property type="project" value="TreeGrafter"/>
</dbReference>
<dbReference type="GO" id="GO:0005886">
    <property type="term" value="C:plasma membrane"/>
    <property type="evidence" value="ECO:0007669"/>
    <property type="project" value="UniProtKB-SubCell"/>
</dbReference>
<dbReference type="GO" id="GO:0043093">
    <property type="term" value="P:FtsZ-dependent cytokinesis"/>
    <property type="evidence" value="ECO:0007669"/>
    <property type="project" value="UniProtKB-UniRule"/>
</dbReference>
<dbReference type="Gene3D" id="1.20.5.400">
    <property type="match status" value="1"/>
</dbReference>
<dbReference type="HAMAP" id="MF_00599">
    <property type="entry name" value="FtsB"/>
    <property type="match status" value="1"/>
</dbReference>
<dbReference type="InterPro" id="IPR023081">
    <property type="entry name" value="Cell_div_FtsB"/>
</dbReference>
<dbReference type="InterPro" id="IPR007060">
    <property type="entry name" value="FtsL/DivIC"/>
</dbReference>
<dbReference type="NCBIfam" id="NF002058">
    <property type="entry name" value="PRK00888.1"/>
    <property type="match status" value="1"/>
</dbReference>
<dbReference type="PANTHER" id="PTHR37485">
    <property type="entry name" value="CELL DIVISION PROTEIN FTSB"/>
    <property type="match status" value="1"/>
</dbReference>
<dbReference type="PANTHER" id="PTHR37485:SF1">
    <property type="entry name" value="CELL DIVISION PROTEIN FTSB"/>
    <property type="match status" value="1"/>
</dbReference>
<dbReference type="Pfam" id="PF04977">
    <property type="entry name" value="DivIC"/>
    <property type="match status" value="1"/>
</dbReference>
<comment type="function">
    <text evidence="1">Essential cell division protein. May link together the upstream cell division proteins, which are predominantly cytoplasmic, with the downstream cell division proteins, which are predominantly periplasmic.</text>
</comment>
<comment type="subunit">
    <text evidence="1">Part of a complex composed of FtsB, FtsL and FtsQ.</text>
</comment>
<comment type="subcellular location">
    <subcellularLocation>
        <location evidence="1">Cell inner membrane</location>
        <topology evidence="1">Single-pass type II membrane protein</topology>
    </subcellularLocation>
    <text evidence="1">Localizes to the division septum.</text>
</comment>
<comment type="similarity">
    <text evidence="1">Belongs to the FtsB family.</text>
</comment>
<feature type="chain" id="PRO_1000129948" description="Cell division protein FtsB">
    <location>
        <begin position="1"/>
        <end position="94"/>
    </location>
</feature>
<feature type="topological domain" description="Cytoplasmic" evidence="1">
    <location>
        <begin position="1"/>
        <end position="3"/>
    </location>
</feature>
<feature type="transmembrane region" description="Helical" evidence="1">
    <location>
        <begin position="4"/>
        <end position="21"/>
    </location>
</feature>
<feature type="topological domain" description="Periplasmic" evidence="1">
    <location>
        <begin position="22"/>
        <end position="94"/>
    </location>
</feature>
<feature type="coiled-coil region" evidence="1">
    <location>
        <begin position="33"/>
        <end position="71"/>
    </location>
</feature>
<keyword id="KW-0131">Cell cycle</keyword>
<keyword id="KW-0132">Cell division</keyword>
<keyword id="KW-0997">Cell inner membrane</keyword>
<keyword id="KW-1003">Cell membrane</keyword>
<keyword id="KW-0175">Coiled coil</keyword>
<keyword id="KW-0472">Membrane</keyword>
<keyword id="KW-0812">Transmembrane</keyword>
<keyword id="KW-1133">Transmembrane helix</keyword>
<organism>
    <name type="scientific">Aliivibrio fischeri (strain MJ11)</name>
    <name type="common">Vibrio fischeri</name>
    <dbReference type="NCBI Taxonomy" id="388396"/>
    <lineage>
        <taxon>Bacteria</taxon>
        <taxon>Pseudomonadati</taxon>
        <taxon>Pseudomonadota</taxon>
        <taxon>Gammaproteobacteria</taxon>
        <taxon>Vibrionales</taxon>
        <taxon>Vibrionaceae</taxon>
        <taxon>Aliivibrio</taxon>
    </lineage>
</organism>
<name>FTSB_ALIFM</name>
<gene>
    <name evidence="1" type="primary">ftsB</name>
    <name type="ordered locus">VFMJ11_2180</name>
</gene>